<comment type="function">
    <text evidence="1">Involved in protein export. Acts as a chaperone by maintaining the newly synthesized protein in an open conformation. Functions as a peptidyl-prolyl cis-trans isomerase.</text>
</comment>
<comment type="catalytic activity">
    <reaction evidence="1">
        <text>[protein]-peptidylproline (omega=180) = [protein]-peptidylproline (omega=0)</text>
        <dbReference type="Rhea" id="RHEA:16237"/>
        <dbReference type="Rhea" id="RHEA-COMP:10747"/>
        <dbReference type="Rhea" id="RHEA-COMP:10748"/>
        <dbReference type="ChEBI" id="CHEBI:83833"/>
        <dbReference type="ChEBI" id="CHEBI:83834"/>
        <dbReference type="EC" id="5.2.1.8"/>
    </reaction>
</comment>
<comment type="subcellular location">
    <subcellularLocation>
        <location>Cytoplasm</location>
    </subcellularLocation>
    <text evidence="1">About half TF is bound to the ribosome near the polypeptide exit tunnel while the other half is free in the cytoplasm.</text>
</comment>
<comment type="domain">
    <text evidence="1">Consists of 3 domains; the N-terminus binds the ribosome, the middle domain has PPIase activity, while the C-terminus has intrinsic chaperone activity on its own.</text>
</comment>
<comment type="similarity">
    <text evidence="1">Belongs to the FKBP-type PPIase family. Tig subfamily.</text>
</comment>
<evidence type="ECO:0000255" key="1">
    <source>
        <dbReference type="HAMAP-Rule" id="MF_00303"/>
    </source>
</evidence>
<evidence type="ECO:0000256" key="2">
    <source>
        <dbReference type="SAM" id="MobiDB-lite"/>
    </source>
</evidence>
<dbReference type="EC" id="5.2.1.8" evidence="1"/>
<dbReference type="EMBL" id="BX897699">
    <property type="protein sequence ID" value="CAF27401.1"/>
    <property type="molecule type" value="Genomic_DNA"/>
</dbReference>
<dbReference type="RefSeq" id="WP_011180521.1">
    <property type="nucleotide sequence ID" value="NZ_LRIJ02000001.1"/>
</dbReference>
<dbReference type="SMR" id="Q6G3Y8"/>
<dbReference type="PaxDb" id="283166-BH05940"/>
<dbReference type="EnsemblBacteria" id="CAF27401">
    <property type="protein sequence ID" value="CAF27401"/>
    <property type="gene ID" value="BH05940"/>
</dbReference>
<dbReference type="GeneID" id="92985253"/>
<dbReference type="KEGG" id="bhe:BH05940"/>
<dbReference type="eggNOG" id="COG0544">
    <property type="taxonomic scope" value="Bacteria"/>
</dbReference>
<dbReference type="OrthoDB" id="9767721at2"/>
<dbReference type="Proteomes" id="UP000000421">
    <property type="component" value="Chromosome"/>
</dbReference>
<dbReference type="GO" id="GO:0005737">
    <property type="term" value="C:cytoplasm"/>
    <property type="evidence" value="ECO:0007669"/>
    <property type="project" value="UniProtKB-SubCell"/>
</dbReference>
<dbReference type="GO" id="GO:0003755">
    <property type="term" value="F:peptidyl-prolyl cis-trans isomerase activity"/>
    <property type="evidence" value="ECO:0007669"/>
    <property type="project" value="UniProtKB-UniRule"/>
</dbReference>
<dbReference type="GO" id="GO:0044183">
    <property type="term" value="F:protein folding chaperone"/>
    <property type="evidence" value="ECO:0007669"/>
    <property type="project" value="TreeGrafter"/>
</dbReference>
<dbReference type="GO" id="GO:0043022">
    <property type="term" value="F:ribosome binding"/>
    <property type="evidence" value="ECO:0007669"/>
    <property type="project" value="TreeGrafter"/>
</dbReference>
<dbReference type="GO" id="GO:0051083">
    <property type="term" value="P:'de novo' cotranslational protein folding"/>
    <property type="evidence" value="ECO:0007669"/>
    <property type="project" value="TreeGrafter"/>
</dbReference>
<dbReference type="GO" id="GO:0051301">
    <property type="term" value="P:cell division"/>
    <property type="evidence" value="ECO:0007669"/>
    <property type="project" value="UniProtKB-KW"/>
</dbReference>
<dbReference type="GO" id="GO:0061077">
    <property type="term" value="P:chaperone-mediated protein folding"/>
    <property type="evidence" value="ECO:0007669"/>
    <property type="project" value="TreeGrafter"/>
</dbReference>
<dbReference type="GO" id="GO:0015031">
    <property type="term" value="P:protein transport"/>
    <property type="evidence" value="ECO:0007669"/>
    <property type="project" value="UniProtKB-UniRule"/>
</dbReference>
<dbReference type="GO" id="GO:0043335">
    <property type="term" value="P:protein unfolding"/>
    <property type="evidence" value="ECO:0007669"/>
    <property type="project" value="TreeGrafter"/>
</dbReference>
<dbReference type="FunFam" id="3.10.50.40:FF:000001">
    <property type="entry name" value="Trigger factor"/>
    <property type="match status" value="1"/>
</dbReference>
<dbReference type="Gene3D" id="3.10.50.40">
    <property type="match status" value="1"/>
</dbReference>
<dbReference type="Gene3D" id="3.30.70.1050">
    <property type="entry name" value="Trigger factor ribosome-binding domain"/>
    <property type="match status" value="1"/>
</dbReference>
<dbReference type="Gene3D" id="1.10.3120.10">
    <property type="entry name" value="Trigger factor, C-terminal domain"/>
    <property type="match status" value="1"/>
</dbReference>
<dbReference type="HAMAP" id="MF_00303">
    <property type="entry name" value="Trigger_factor_Tig"/>
    <property type="match status" value="1"/>
</dbReference>
<dbReference type="InterPro" id="IPR046357">
    <property type="entry name" value="PPIase_dom_sf"/>
</dbReference>
<dbReference type="InterPro" id="IPR001179">
    <property type="entry name" value="PPIase_FKBP_dom"/>
</dbReference>
<dbReference type="InterPro" id="IPR005215">
    <property type="entry name" value="Trig_fac"/>
</dbReference>
<dbReference type="InterPro" id="IPR008880">
    <property type="entry name" value="Trigger_fac_C"/>
</dbReference>
<dbReference type="InterPro" id="IPR037041">
    <property type="entry name" value="Trigger_fac_C_sf"/>
</dbReference>
<dbReference type="InterPro" id="IPR008881">
    <property type="entry name" value="Trigger_fac_ribosome-bd_bac"/>
</dbReference>
<dbReference type="InterPro" id="IPR036611">
    <property type="entry name" value="Trigger_fac_ribosome-bd_sf"/>
</dbReference>
<dbReference type="InterPro" id="IPR027304">
    <property type="entry name" value="Trigger_fact/SurA_dom_sf"/>
</dbReference>
<dbReference type="NCBIfam" id="TIGR00115">
    <property type="entry name" value="tig"/>
    <property type="match status" value="1"/>
</dbReference>
<dbReference type="PANTHER" id="PTHR30560">
    <property type="entry name" value="TRIGGER FACTOR CHAPERONE AND PEPTIDYL-PROLYL CIS/TRANS ISOMERASE"/>
    <property type="match status" value="1"/>
</dbReference>
<dbReference type="PANTHER" id="PTHR30560:SF3">
    <property type="entry name" value="TRIGGER FACTOR-LIKE PROTEIN TIG, CHLOROPLASTIC"/>
    <property type="match status" value="1"/>
</dbReference>
<dbReference type="Pfam" id="PF00254">
    <property type="entry name" value="FKBP_C"/>
    <property type="match status" value="1"/>
</dbReference>
<dbReference type="Pfam" id="PF05698">
    <property type="entry name" value="Trigger_C"/>
    <property type="match status" value="1"/>
</dbReference>
<dbReference type="Pfam" id="PF05697">
    <property type="entry name" value="Trigger_N"/>
    <property type="match status" value="1"/>
</dbReference>
<dbReference type="PIRSF" id="PIRSF003095">
    <property type="entry name" value="Trigger_factor"/>
    <property type="match status" value="1"/>
</dbReference>
<dbReference type="SUPFAM" id="SSF54534">
    <property type="entry name" value="FKBP-like"/>
    <property type="match status" value="1"/>
</dbReference>
<dbReference type="SUPFAM" id="SSF109998">
    <property type="entry name" value="Triger factor/SurA peptide-binding domain-like"/>
    <property type="match status" value="1"/>
</dbReference>
<dbReference type="SUPFAM" id="SSF102735">
    <property type="entry name" value="Trigger factor ribosome-binding domain"/>
    <property type="match status" value="1"/>
</dbReference>
<dbReference type="PROSITE" id="PS50059">
    <property type="entry name" value="FKBP_PPIASE"/>
    <property type="match status" value="1"/>
</dbReference>
<proteinExistence type="inferred from homology"/>
<feature type="chain" id="PRO_0000179314" description="Trigger factor">
    <location>
        <begin position="1"/>
        <end position="469"/>
    </location>
</feature>
<feature type="domain" description="PPIase FKBP-type" evidence="1">
    <location>
        <begin position="165"/>
        <end position="250"/>
    </location>
</feature>
<feature type="region of interest" description="Disordered" evidence="2">
    <location>
        <begin position="444"/>
        <end position="469"/>
    </location>
</feature>
<feature type="compositionally biased region" description="Basic and acidic residues" evidence="2">
    <location>
        <begin position="444"/>
        <end position="460"/>
    </location>
</feature>
<reference key="1">
    <citation type="journal article" date="2004" name="Proc. Natl. Acad. Sci. U.S.A.">
        <title>The louse-borne human pathogen Bartonella quintana is a genomic derivative of the zoonotic agent Bartonella henselae.</title>
        <authorList>
            <person name="Alsmark U.C.M."/>
            <person name="Frank A.C."/>
            <person name="Karlberg E.O."/>
            <person name="Legault B.-A."/>
            <person name="Ardell D.H."/>
            <person name="Canbaeck B."/>
            <person name="Eriksson A.-S."/>
            <person name="Naeslund A.K."/>
            <person name="Handley S.A."/>
            <person name="Huvet M."/>
            <person name="La Scola B."/>
            <person name="Holmberg M."/>
            <person name="Andersson S.G.E."/>
        </authorList>
    </citation>
    <scope>NUCLEOTIDE SEQUENCE [LARGE SCALE GENOMIC DNA]</scope>
    <source>
        <strain>ATCC 49882 / DSM 28221 / CCUG 30454 / Houston 1</strain>
    </source>
</reference>
<sequence length="469" mass="53223">MQVTETLNEGLKREIKIVVPARNLEEKLNERLDNTKDKIKLNGFRPGKVPAGYLRKMYGKSFMAEILNEIVSDASRSILAERGERSAMQPKIDVEEDKKILDGKADFIFSLKYEVLPKFEIKDFEHIEIIREIAVIPEQEIDDQVKRVLSSACNYSLKDGPSEEGDRVTIDYIGKLEGVPFEGGAESDAQLILGSKQFIPGFEEQLVGVKAGDMKTISVKFPDNYSAVHLAGKNAEFDITVKAVCKSDELKIDDEAAQKVGLESLERLREVVRGQIESQYGSMTRQKIKRQILDALDADYNFEIPEGLLEIEFNNIWAQVNDDLKKAGRSFEDEGVTEEQAREEYRVLAQRRVRLGLVLSEIGMNIGVKVSEDELKAAVFDQVRQYPGQEKEIMDFFRNTPEAVANLRAPIFEEKVIDHLLARIKVTDKEVTVEELMKEYDETDLTEKKPLKKKTAEKVSTKKKAPKKS</sequence>
<keyword id="KW-0131">Cell cycle</keyword>
<keyword id="KW-0132">Cell division</keyword>
<keyword id="KW-0143">Chaperone</keyword>
<keyword id="KW-0963">Cytoplasm</keyword>
<keyword id="KW-0413">Isomerase</keyword>
<keyword id="KW-0697">Rotamase</keyword>
<protein>
    <recommendedName>
        <fullName evidence="1">Trigger factor</fullName>
        <shortName evidence="1">TF</shortName>
        <ecNumber evidence="1">5.2.1.8</ecNumber>
    </recommendedName>
    <alternativeName>
        <fullName evidence="1">PPIase</fullName>
    </alternativeName>
</protein>
<organism>
    <name type="scientific">Bartonella henselae (strain ATCC 49882 / DSM 28221 / CCUG 30454 / Houston 1)</name>
    <name type="common">Rochalimaea henselae</name>
    <dbReference type="NCBI Taxonomy" id="283166"/>
    <lineage>
        <taxon>Bacteria</taxon>
        <taxon>Pseudomonadati</taxon>
        <taxon>Pseudomonadota</taxon>
        <taxon>Alphaproteobacteria</taxon>
        <taxon>Hyphomicrobiales</taxon>
        <taxon>Bartonellaceae</taxon>
        <taxon>Bartonella</taxon>
    </lineage>
</organism>
<accession>Q6G3Y8</accession>
<gene>
    <name evidence="1" type="primary">tig</name>
    <name type="ordered locus">BH05940</name>
</gene>
<name>TIG_BARHE</name>